<keyword id="KW-0998">Cell outer membrane</keyword>
<keyword id="KW-0472">Membrane</keyword>
<keyword id="KW-1185">Reference proteome</keyword>
<keyword id="KW-0732">Signal</keyword>
<keyword id="KW-0812">Transmembrane</keyword>
<keyword id="KW-1134">Transmembrane beta strand</keyword>
<name>Y088_NEIMB</name>
<gene>
    <name type="ordered locus">NMB0088</name>
</gene>
<feature type="signal peptide" evidence="1">
    <location>
        <begin position="1"/>
        <end position="24"/>
    </location>
</feature>
<feature type="chain" id="PRO_0000349890" description="Putative outer membrane protein NMB0088">
    <location>
        <begin position="25"/>
        <end position="466"/>
    </location>
</feature>
<comment type="subcellular location">
    <subcellularLocation>
        <location evidence="2">Cell outer membrane</location>
        <topology evidence="2">Multi-pass membrane protein</topology>
    </subcellularLocation>
</comment>
<comment type="miscellaneous">
    <text>Present in outer membrane vesicle formulations which are used as vaccines in human.</text>
</comment>
<comment type="similarity">
    <text evidence="2">Belongs to the OmpP1/FadL family.</text>
</comment>
<sequence>MTPSALKKTVLLLGTAFAAASVHASGYHFGTQSVNAQSTANAAAAEAADASTIFYNPAGLTKLDSSQISVNANIVLPSIHYEADSATDFTGLPVQGSKSGKITKTTVAPHIYGAYKVNDNLTVGLGVYVPFGSATEYEKDSVLRHNINKLGLTSIAVEPVAAWKLNDRHSFGAGIIAQHTSAELRKYADWGIKSKAEILTAKPPKPNGVAEAAKIQADGHADVKGSDWGFGYQLAWMWDINDRARVGVNYRSKVSHTLKGDAEWAADGAAAKAMWSTMLAANGYTANEKARVKIVTPESLSVHGMYKVSDKADLFGDVTWTRHSRFDKAELVFEKEKTVVKGKSDRTTITPNWRNTYKVGFGGSYQISEPLQLRAGIAFDKSPVRNADYRMNSLPDGNRIWFSAGMKYHIGKNHVVDAAYTHIHINDTSYRTAKASGNDVDSKGASSARFKNHADIIGLQYTYKFK</sequence>
<organism>
    <name type="scientific">Neisseria meningitidis serogroup B (strain ATCC BAA-335 / MC58)</name>
    <dbReference type="NCBI Taxonomy" id="122586"/>
    <lineage>
        <taxon>Bacteria</taxon>
        <taxon>Pseudomonadati</taxon>
        <taxon>Pseudomonadota</taxon>
        <taxon>Betaproteobacteria</taxon>
        <taxon>Neisseriales</taxon>
        <taxon>Neisseriaceae</taxon>
        <taxon>Neisseria</taxon>
    </lineage>
</organism>
<accession>Q9K1M2</accession>
<reference key="1">
    <citation type="journal article" date="2000" name="Science">
        <title>Complete genome sequence of Neisseria meningitidis serogroup B strain MC58.</title>
        <authorList>
            <person name="Tettelin H."/>
            <person name="Saunders N.J."/>
            <person name="Heidelberg J.F."/>
            <person name="Jeffries A.C."/>
            <person name="Nelson K.E."/>
            <person name="Eisen J.A."/>
            <person name="Ketchum K.A."/>
            <person name="Hood D.W."/>
            <person name="Peden J.F."/>
            <person name="Dodson R.J."/>
            <person name="Nelson W.C."/>
            <person name="Gwinn M.L."/>
            <person name="DeBoy R.T."/>
            <person name="Peterson J.D."/>
            <person name="Hickey E.K."/>
            <person name="Haft D.H."/>
            <person name="Salzberg S.L."/>
            <person name="White O."/>
            <person name="Fleischmann R.D."/>
            <person name="Dougherty B.A."/>
            <person name="Mason T.M."/>
            <person name="Ciecko A."/>
            <person name="Parksey D.S."/>
            <person name="Blair E."/>
            <person name="Cittone H."/>
            <person name="Clark E.B."/>
            <person name="Cotton M.D."/>
            <person name="Utterback T.R."/>
            <person name="Khouri H.M."/>
            <person name="Qin H."/>
            <person name="Vamathevan J.J."/>
            <person name="Gill J."/>
            <person name="Scarlato V."/>
            <person name="Masignani V."/>
            <person name="Pizza M."/>
            <person name="Grandi G."/>
            <person name="Sun L."/>
            <person name="Smith H.O."/>
            <person name="Fraser C.M."/>
            <person name="Moxon E.R."/>
            <person name="Rappuoli R."/>
            <person name="Venter J.C."/>
        </authorList>
    </citation>
    <scope>NUCLEOTIDE SEQUENCE [LARGE SCALE GENOMIC DNA]</scope>
    <source>
        <strain>ATCC BAA-335 / MC58</strain>
    </source>
</reference>
<reference key="2">
    <citation type="journal article" date="2005" name="Hum. Vaccin.">
        <title>Characterization of the protein content of a meningococcal outer membrane vesicle vaccine by polyacrylamide gel electrophoresis and mass spectrometry.</title>
        <authorList>
            <person name="Vipond C."/>
            <person name="Wheeler J.X."/>
            <person name="Jones C."/>
            <person name="Feavers I.M."/>
            <person name="Suker J."/>
        </authorList>
    </citation>
    <scope>IDENTIFICATION BY MASS SPECTROMETRY [LARGE SCALE ANALYSIS]</scope>
</reference>
<reference key="3">
    <citation type="journal article" date="2006" name="Proteomics">
        <title>Proteomic analysis of a meningococcal outer membrane vesicle vaccine prepared from the group B strain NZ98/254.</title>
        <authorList>
            <person name="Vipond C."/>
            <person name="Suker J."/>
            <person name="Jones C."/>
            <person name="Tang C."/>
            <person name="Feavers I.M."/>
            <person name="Wheeler J.X."/>
        </authorList>
    </citation>
    <scope>IDENTIFICATION BY MASS SPECTROMETRY [LARGE SCALE ANALYSIS]</scope>
    <source>
        <strain>NZ98/254 / Serogroup B</strain>
    </source>
</reference>
<proteinExistence type="evidence at protein level"/>
<dbReference type="EMBL" id="AE002098">
    <property type="protein sequence ID" value="AAF40551.1"/>
    <property type="molecule type" value="Genomic_DNA"/>
</dbReference>
<dbReference type="PIR" id="A81239">
    <property type="entry name" value="A81239"/>
</dbReference>
<dbReference type="RefSeq" id="NP_273150.1">
    <property type="nucleotide sequence ID" value="NC_003112.2"/>
</dbReference>
<dbReference type="RefSeq" id="WP_002221819.1">
    <property type="nucleotide sequence ID" value="NC_003112.2"/>
</dbReference>
<dbReference type="SMR" id="Q9K1M2"/>
<dbReference type="FunCoup" id="Q9K1M2">
    <property type="interactions" value="43"/>
</dbReference>
<dbReference type="STRING" id="122586.NMB0088"/>
<dbReference type="PaxDb" id="122586-NMB0088"/>
<dbReference type="KEGG" id="nme:NMB0088"/>
<dbReference type="PATRIC" id="fig|122586.8.peg.125"/>
<dbReference type="HOGENOM" id="CLU_035981_0_1_4"/>
<dbReference type="InParanoid" id="Q9K1M2"/>
<dbReference type="OrthoDB" id="19849at2"/>
<dbReference type="Proteomes" id="UP000000425">
    <property type="component" value="Chromosome"/>
</dbReference>
<dbReference type="GO" id="GO:0009279">
    <property type="term" value="C:cell outer membrane"/>
    <property type="evidence" value="ECO:0007669"/>
    <property type="project" value="UniProtKB-SubCell"/>
</dbReference>
<dbReference type="GO" id="GO:0015483">
    <property type="term" value="F:long-chain fatty acid transporting porin activity"/>
    <property type="evidence" value="ECO:0000318"/>
    <property type="project" value="GO_Central"/>
</dbReference>
<dbReference type="FunFam" id="2.40.160.60:FF:000003">
    <property type="entry name" value="Outer membrane transport family protein"/>
    <property type="match status" value="1"/>
</dbReference>
<dbReference type="Gene3D" id="2.40.160.60">
    <property type="entry name" value="Outer membrane protein transport protein (OMPP1/FadL/TodX)"/>
    <property type="match status" value="1"/>
</dbReference>
<dbReference type="InterPro" id="IPR005017">
    <property type="entry name" value="OMPP1/FadL/TodX"/>
</dbReference>
<dbReference type="PANTHER" id="PTHR35093">
    <property type="entry name" value="OUTER MEMBRANE PROTEIN NMB0088-RELATED"/>
    <property type="match status" value="1"/>
</dbReference>
<dbReference type="PANTHER" id="PTHR35093:SF8">
    <property type="entry name" value="OUTER MEMBRANE PROTEIN NMB0088-RELATED"/>
    <property type="match status" value="1"/>
</dbReference>
<dbReference type="Pfam" id="PF03349">
    <property type="entry name" value="Toluene_X"/>
    <property type="match status" value="1"/>
</dbReference>
<dbReference type="SUPFAM" id="SSF56935">
    <property type="entry name" value="Porins"/>
    <property type="match status" value="1"/>
</dbReference>
<protein>
    <recommendedName>
        <fullName>Putative outer membrane protein NMB0088</fullName>
    </recommendedName>
</protein>
<evidence type="ECO:0000255" key="1"/>
<evidence type="ECO:0000305" key="2"/>